<sequence length="182" mass="19765">MPFTSEIISIILLAIGLSMDGFSVSLGLGMQQLRLKRIAYIGLTIGFLHMLMPLAGMLLGQVISEQIGQWTSFAGGVLLFLIGAHMFFSAFRLTEGFRWQPVGVGLWIIAFSVSLDSFTVGLGLGISGVQIFVTLFAFGIVSCFLTWLGMLIGRKVYRFLGVYSELLGGSILCGFGIFILFS</sequence>
<protein>
    <recommendedName>
        <fullName evidence="1">Putative manganese efflux pump MntP</fullName>
    </recommendedName>
</protein>
<organism>
    <name type="scientific">Oceanobacillus iheyensis (strain DSM 14371 / CIP 107618 / JCM 11309 / KCTC 3954 / HTE831)</name>
    <dbReference type="NCBI Taxonomy" id="221109"/>
    <lineage>
        <taxon>Bacteria</taxon>
        <taxon>Bacillati</taxon>
        <taxon>Bacillota</taxon>
        <taxon>Bacilli</taxon>
        <taxon>Bacillales</taxon>
        <taxon>Bacillaceae</taxon>
        <taxon>Oceanobacillus</taxon>
    </lineage>
</organism>
<dbReference type="EMBL" id="BA000028">
    <property type="protein sequence ID" value="BAC14949.1"/>
    <property type="molecule type" value="Genomic_DNA"/>
</dbReference>
<dbReference type="RefSeq" id="WP_011067389.1">
    <property type="nucleotide sequence ID" value="NC_004193.1"/>
</dbReference>
<dbReference type="STRING" id="221109.gene:10735245"/>
<dbReference type="KEGG" id="oih:OB2993"/>
<dbReference type="eggNOG" id="COG1971">
    <property type="taxonomic scope" value="Bacteria"/>
</dbReference>
<dbReference type="HOGENOM" id="CLU_096410_1_1_9"/>
<dbReference type="OrthoDB" id="1679700at2"/>
<dbReference type="PhylomeDB" id="Q8EM65"/>
<dbReference type="Proteomes" id="UP000000822">
    <property type="component" value="Chromosome"/>
</dbReference>
<dbReference type="GO" id="GO:0005886">
    <property type="term" value="C:plasma membrane"/>
    <property type="evidence" value="ECO:0007669"/>
    <property type="project" value="UniProtKB-SubCell"/>
</dbReference>
<dbReference type="GO" id="GO:0005384">
    <property type="term" value="F:manganese ion transmembrane transporter activity"/>
    <property type="evidence" value="ECO:0007669"/>
    <property type="project" value="UniProtKB-UniRule"/>
</dbReference>
<dbReference type="HAMAP" id="MF_01521">
    <property type="entry name" value="MntP_pump"/>
    <property type="match status" value="1"/>
</dbReference>
<dbReference type="InterPro" id="IPR003810">
    <property type="entry name" value="Mntp/YtaF"/>
</dbReference>
<dbReference type="InterPro" id="IPR022929">
    <property type="entry name" value="Put_MntP"/>
</dbReference>
<dbReference type="PANTHER" id="PTHR35529">
    <property type="entry name" value="MANGANESE EFFLUX PUMP MNTP-RELATED"/>
    <property type="match status" value="1"/>
</dbReference>
<dbReference type="PANTHER" id="PTHR35529:SF1">
    <property type="entry name" value="MANGANESE EFFLUX PUMP MNTP-RELATED"/>
    <property type="match status" value="1"/>
</dbReference>
<dbReference type="Pfam" id="PF02659">
    <property type="entry name" value="Mntp"/>
    <property type="match status" value="1"/>
</dbReference>
<comment type="function">
    <text evidence="1">Probably functions as a manganese efflux pump.</text>
</comment>
<comment type="subcellular location">
    <subcellularLocation>
        <location evidence="1">Cell membrane</location>
        <topology evidence="1">Multi-pass membrane protein</topology>
    </subcellularLocation>
</comment>
<comment type="similarity">
    <text evidence="1">Belongs to the MntP (TC 9.B.29) family.</text>
</comment>
<name>MNTP_OCEIH</name>
<feature type="chain" id="PRO_0000155659" description="Putative manganese efflux pump MntP">
    <location>
        <begin position="1"/>
        <end position="182"/>
    </location>
</feature>
<feature type="transmembrane region" description="Helical" evidence="1">
    <location>
        <begin position="7"/>
        <end position="27"/>
    </location>
</feature>
<feature type="transmembrane region" description="Helical" evidence="1">
    <location>
        <begin position="38"/>
        <end position="58"/>
    </location>
</feature>
<feature type="transmembrane region" description="Helical" evidence="1">
    <location>
        <begin position="71"/>
        <end position="91"/>
    </location>
</feature>
<feature type="transmembrane region" description="Helical" evidence="1">
    <location>
        <begin position="106"/>
        <end position="126"/>
    </location>
</feature>
<feature type="transmembrane region" description="Helical" evidence="1">
    <location>
        <begin position="131"/>
        <end position="151"/>
    </location>
</feature>
<feature type="transmembrane region" description="Helical" evidence="1">
    <location>
        <begin position="159"/>
        <end position="179"/>
    </location>
</feature>
<proteinExistence type="inferred from homology"/>
<reference key="1">
    <citation type="journal article" date="2002" name="Nucleic Acids Res.">
        <title>Genome sequence of Oceanobacillus iheyensis isolated from the Iheya Ridge and its unexpected adaptive capabilities to extreme environments.</title>
        <authorList>
            <person name="Takami H."/>
            <person name="Takaki Y."/>
            <person name="Uchiyama I."/>
        </authorList>
    </citation>
    <scope>NUCLEOTIDE SEQUENCE [LARGE SCALE GENOMIC DNA]</scope>
    <source>
        <strain>DSM 14371 / CIP 107618 / JCM 11309 / KCTC 3954 / HTE831</strain>
    </source>
</reference>
<accession>Q8EM65</accession>
<evidence type="ECO:0000255" key="1">
    <source>
        <dbReference type="HAMAP-Rule" id="MF_01521"/>
    </source>
</evidence>
<keyword id="KW-1003">Cell membrane</keyword>
<keyword id="KW-0406">Ion transport</keyword>
<keyword id="KW-0464">Manganese</keyword>
<keyword id="KW-0472">Membrane</keyword>
<keyword id="KW-1185">Reference proteome</keyword>
<keyword id="KW-0812">Transmembrane</keyword>
<keyword id="KW-1133">Transmembrane helix</keyword>
<keyword id="KW-0813">Transport</keyword>
<gene>
    <name evidence="1" type="primary">mntP</name>
    <name type="ordered locus">OB2993</name>
</gene>